<name>DER_CUPMC</name>
<accession>Q1LLJ5</accession>
<sequence length="447" mass="49323">MKPVIALVGRPNVGKSTLFNRMTRSRDALVADLPGLTRDRHYGEGRIGDRPFIVIDTGGFEPVAKEGIVAEMAKQTRQAVVEADVVIFLVDGRLGLAPQDRVIADYLRKTGRRVMLAINKAEGMKYTSVAADFYELGMGDPYAISSTHGDGVRELVDEALDLAVQERPELADQEDAGQHGVKIAIVGRPNVGKSTLVNTLIGEERVIAFDMPGTTRDAIYVEFERGGKPYTLIDTAGLRKRGKVFEAIEKFSVVKTLQSIADANVVVLLLDAQQDISEQDAHIAGFIVESGRALVVGVNKWDGLDGHQRDRVKHDLERKLQFLSFANIHFVSARERTGIGALLRSVDDAYAAAMIKLPTPQITRVLQEAVEFQQPKRVGVSRPKLRYAHQGGSNPPIIVVHGNALSGVTDAYRRYLENRFRTAFKLKGTPLRIEFRTNKNPYAESKD</sequence>
<evidence type="ECO:0000255" key="1">
    <source>
        <dbReference type="HAMAP-Rule" id="MF_00195"/>
    </source>
</evidence>
<protein>
    <recommendedName>
        <fullName evidence="1">GTPase Der</fullName>
    </recommendedName>
    <alternativeName>
        <fullName evidence="1">GTP-binding protein EngA</fullName>
    </alternativeName>
</protein>
<feature type="chain" id="PRO_1000011712" description="GTPase Der">
    <location>
        <begin position="1"/>
        <end position="447"/>
    </location>
</feature>
<feature type="domain" description="EngA-type G 1">
    <location>
        <begin position="3"/>
        <end position="167"/>
    </location>
</feature>
<feature type="domain" description="EngA-type G 2">
    <location>
        <begin position="181"/>
        <end position="354"/>
    </location>
</feature>
<feature type="domain" description="KH-like" evidence="1">
    <location>
        <begin position="355"/>
        <end position="439"/>
    </location>
</feature>
<feature type="binding site" evidence="1">
    <location>
        <begin position="9"/>
        <end position="16"/>
    </location>
    <ligand>
        <name>GTP</name>
        <dbReference type="ChEBI" id="CHEBI:37565"/>
        <label>1</label>
    </ligand>
</feature>
<feature type="binding site" evidence="1">
    <location>
        <begin position="56"/>
        <end position="60"/>
    </location>
    <ligand>
        <name>GTP</name>
        <dbReference type="ChEBI" id="CHEBI:37565"/>
        <label>1</label>
    </ligand>
</feature>
<feature type="binding site" evidence="1">
    <location>
        <begin position="119"/>
        <end position="122"/>
    </location>
    <ligand>
        <name>GTP</name>
        <dbReference type="ChEBI" id="CHEBI:37565"/>
        <label>1</label>
    </ligand>
</feature>
<feature type="binding site" evidence="1">
    <location>
        <begin position="187"/>
        <end position="194"/>
    </location>
    <ligand>
        <name>GTP</name>
        <dbReference type="ChEBI" id="CHEBI:37565"/>
        <label>2</label>
    </ligand>
</feature>
<feature type="binding site" evidence="1">
    <location>
        <begin position="234"/>
        <end position="238"/>
    </location>
    <ligand>
        <name>GTP</name>
        <dbReference type="ChEBI" id="CHEBI:37565"/>
        <label>2</label>
    </ligand>
</feature>
<feature type="binding site" evidence="1">
    <location>
        <begin position="299"/>
        <end position="302"/>
    </location>
    <ligand>
        <name>GTP</name>
        <dbReference type="ChEBI" id="CHEBI:37565"/>
        <label>2</label>
    </ligand>
</feature>
<gene>
    <name evidence="1" type="primary">der</name>
    <name type="synonym">engA</name>
    <name type="ordered locus">Rmet_2102</name>
</gene>
<dbReference type="EMBL" id="CP000352">
    <property type="protein sequence ID" value="ABF08981.1"/>
    <property type="molecule type" value="Genomic_DNA"/>
</dbReference>
<dbReference type="RefSeq" id="WP_011516815.1">
    <property type="nucleotide sequence ID" value="NC_007973.1"/>
</dbReference>
<dbReference type="SMR" id="Q1LLJ5"/>
<dbReference type="STRING" id="266264.Rmet_2102"/>
<dbReference type="KEGG" id="rme:Rmet_2102"/>
<dbReference type="eggNOG" id="COG1160">
    <property type="taxonomic scope" value="Bacteria"/>
</dbReference>
<dbReference type="HOGENOM" id="CLU_016077_6_2_4"/>
<dbReference type="Proteomes" id="UP000002429">
    <property type="component" value="Chromosome"/>
</dbReference>
<dbReference type="GO" id="GO:0016887">
    <property type="term" value="F:ATP hydrolysis activity"/>
    <property type="evidence" value="ECO:0007669"/>
    <property type="project" value="InterPro"/>
</dbReference>
<dbReference type="GO" id="GO:0005525">
    <property type="term" value="F:GTP binding"/>
    <property type="evidence" value="ECO:0007669"/>
    <property type="project" value="UniProtKB-UniRule"/>
</dbReference>
<dbReference type="GO" id="GO:0043022">
    <property type="term" value="F:ribosome binding"/>
    <property type="evidence" value="ECO:0007669"/>
    <property type="project" value="TreeGrafter"/>
</dbReference>
<dbReference type="GO" id="GO:0042254">
    <property type="term" value="P:ribosome biogenesis"/>
    <property type="evidence" value="ECO:0007669"/>
    <property type="project" value="UniProtKB-KW"/>
</dbReference>
<dbReference type="CDD" id="cd01894">
    <property type="entry name" value="EngA1"/>
    <property type="match status" value="1"/>
</dbReference>
<dbReference type="CDD" id="cd01895">
    <property type="entry name" value="EngA2"/>
    <property type="match status" value="1"/>
</dbReference>
<dbReference type="FunFam" id="3.30.300.20:FF:000004">
    <property type="entry name" value="GTPase Der"/>
    <property type="match status" value="1"/>
</dbReference>
<dbReference type="FunFam" id="3.40.50.300:FF:000040">
    <property type="entry name" value="GTPase Der"/>
    <property type="match status" value="1"/>
</dbReference>
<dbReference type="FunFam" id="3.40.50.300:FF:000057">
    <property type="entry name" value="GTPase Der"/>
    <property type="match status" value="1"/>
</dbReference>
<dbReference type="Gene3D" id="3.30.300.20">
    <property type="match status" value="1"/>
</dbReference>
<dbReference type="Gene3D" id="3.40.50.300">
    <property type="entry name" value="P-loop containing nucleotide triphosphate hydrolases"/>
    <property type="match status" value="2"/>
</dbReference>
<dbReference type="HAMAP" id="MF_00195">
    <property type="entry name" value="GTPase_Der"/>
    <property type="match status" value="1"/>
</dbReference>
<dbReference type="InterPro" id="IPR003593">
    <property type="entry name" value="AAA+_ATPase"/>
</dbReference>
<dbReference type="InterPro" id="IPR031166">
    <property type="entry name" value="G_ENGA"/>
</dbReference>
<dbReference type="InterPro" id="IPR006073">
    <property type="entry name" value="GTP-bd"/>
</dbReference>
<dbReference type="InterPro" id="IPR016484">
    <property type="entry name" value="GTPase_Der"/>
</dbReference>
<dbReference type="InterPro" id="IPR032859">
    <property type="entry name" value="KH_dom-like"/>
</dbReference>
<dbReference type="InterPro" id="IPR015946">
    <property type="entry name" value="KH_dom-like_a/b"/>
</dbReference>
<dbReference type="InterPro" id="IPR027417">
    <property type="entry name" value="P-loop_NTPase"/>
</dbReference>
<dbReference type="InterPro" id="IPR005225">
    <property type="entry name" value="Small_GTP-bd"/>
</dbReference>
<dbReference type="NCBIfam" id="TIGR03594">
    <property type="entry name" value="GTPase_EngA"/>
    <property type="match status" value="1"/>
</dbReference>
<dbReference type="NCBIfam" id="TIGR00231">
    <property type="entry name" value="small_GTP"/>
    <property type="match status" value="2"/>
</dbReference>
<dbReference type="PANTHER" id="PTHR43834">
    <property type="entry name" value="GTPASE DER"/>
    <property type="match status" value="1"/>
</dbReference>
<dbReference type="PANTHER" id="PTHR43834:SF6">
    <property type="entry name" value="GTPASE DER"/>
    <property type="match status" value="1"/>
</dbReference>
<dbReference type="Pfam" id="PF14714">
    <property type="entry name" value="KH_dom-like"/>
    <property type="match status" value="1"/>
</dbReference>
<dbReference type="Pfam" id="PF01926">
    <property type="entry name" value="MMR_HSR1"/>
    <property type="match status" value="2"/>
</dbReference>
<dbReference type="PIRSF" id="PIRSF006485">
    <property type="entry name" value="GTP-binding_EngA"/>
    <property type="match status" value="1"/>
</dbReference>
<dbReference type="PRINTS" id="PR00326">
    <property type="entry name" value="GTP1OBG"/>
</dbReference>
<dbReference type="SMART" id="SM00382">
    <property type="entry name" value="AAA"/>
    <property type="match status" value="2"/>
</dbReference>
<dbReference type="SUPFAM" id="SSF52540">
    <property type="entry name" value="P-loop containing nucleoside triphosphate hydrolases"/>
    <property type="match status" value="2"/>
</dbReference>
<dbReference type="PROSITE" id="PS51712">
    <property type="entry name" value="G_ENGA"/>
    <property type="match status" value="2"/>
</dbReference>
<organism>
    <name type="scientific">Cupriavidus metallidurans (strain ATCC 43123 / DSM 2839 / NBRC 102507 / CH34)</name>
    <name type="common">Ralstonia metallidurans</name>
    <dbReference type="NCBI Taxonomy" id="266264"/>
    <lineage>
        <taxon>Bacteria</taxon>
        <taxon>Pseudomonadati</taxon>
        <taxon>Pseudomonadota</taxon>
        <taxon>Betaproteobacteria</taxon>
        <taxon>Burkholderiales</taxon>
        <taxon>Burkholderiaceae</taxon>
        <taxon>Cupriavidus</taxon>
    </lineage>
</organism>
<comment type="function">
    <text evidence="1">GTPase that plays an essential role in the late steps of ribosome biogenesis.</text>
</comment>
<comment type="subunit">
    <text evidence="1">Associates with the 50S ribosomal subunit.</text>
</comment>
<comment type="similarity">
    <text evidence="1">Belongs to the TRAFAC class TrmE-Era-EngA-EngB-Septin-like GTPase superfamily. EngA (Der) GTPase family.</text>
</comment>
<proteinExistence type="inferred from homology"/>
<reference key="1">
    <citation type="journal article" date="2010" name="PLoS ONE">
        <title>The complete genome sequence of Cupriavidus metallidurans strain CH34, a master survivalist in harsh and anthropogenic environments.</title>
        <authorList>
            <person name="Janssen P.J."/>
            <person name="Van Houdt R."/>
            <person name="Moors H."/>
            <person name="Monsieurs P."/>
            <person name="Morin N."/>
            <person name="Michaux A."/>
            <person name="Benotmane M.A."/>
            <person name="Leys N."/>
            <person name="Vallaeys T."/>
            <person name="Lapidus A."/>
            <person name="Monchy S."/>
            <person name="Medigue C."/>
            <person name="Taghavi S."/>
            <person name="McCorkle S."/>
            <person name="Dunn J."/>
            <person name="van der Lelie D."/>
            <person name="Mergeay M."/>
        </authorList>
    </citation>
    <scope>NUCLEOTIDE SEQUENCE [LARGE SCALE GENOMIC DNA]</scope>
    <source>
        <strain>ATCC 43123 / DSM 2839 / NBRC 102507 / CH34</strain>
    </source>
</reference>
<keyword id="KW-0342">GTP-binding</keyword>
<keyword id="KW-0547">Nucleotide-binding</keyword>
<keyword id="KW-1185">Reference proteome</keyword>
<keyword id="KW-0677">Repeat</keyword>
<keyword id="KW-0690">Ribosome biogenesis</keyword>